<gene>
    <name evidence="1" type="primary">proA</name>
    <name type="ordered locus">BAMEG_1612</name>
</gene>
<comment type="function">
    <text evidence="1">Catalyzes the NADPH-dependent reduction of L-glutamate 5-phosphate into L-glutamate 5-semialdehyde and phosphate. The product spontaneously undergoes cyclization to form 1-pyrroline-5-carboxylate.</text>
</comment>
<comment type="catalytic activity">
    <reaction evidence="1">
        <text>L-glutamate 5-semialdehyde + phosphate + NADP(+) = L-glutamyl 5-phosphate + NADPH + H(+)</text>
        <dbReference type="Rhea" id="RHEA:19541"/>
        <dbReference type="ChEBI" id="CHEBI:15378"/>
        <dbReference type="ChEBI" id="CHEBI:43474"/>
        <dbReference type="ChEBI" id="CHEBI:57783"/>
        <dbReference type="ChEBI" id="CHEBI:58066"/>
        <dbReference type="ChEBI" id="CHEBI:58274"/>
        <dbReference type="ChEBI" id="CHEBI:58349"/>
        <dbReference type="EC" id="1.2.1.41"/>
    </reaction>
</comment>
<comment type="pathway">
    <text evidence="1">Amino-acid biosynthesis; L-proline biosynthesis; L-glutamate 5-semialdehyde from L-glutamate: step 2/2.</text>
</comment>
<comment type="subcellular location">
    <subcellularLocation>
        <location evidence="1">Cytoplasm</location>
    </subcellularLocation>
</comment>
<comment type="similarity">
    <text evidence="1">Belongs to the gamma-glutamyl phosphate reductase family.</text>
</comment>
<feature type="chain" id="PRO_1000193566" description="Gamma-glutamyl phosphate reductase">
    <location>
        <begin position="1"/>
        <end position="414"/>
    </location>
</feature>
<proteinExistence type="inferred from homology"/>
<sequence length="414" mass="45436">MNEVLAKGKKAKEIARELVLKSTEQKNEALSAIADQLILETAYILEENKKDIEEGKAKGFSDSLLDRLMLNEQRIVDMTEGIKQLIELRDPVGECVSAWERPNGLSIQEMRVPLGVVGMIYEARPNVTVDAATICLKTGNAVILRGSSSAIHSNKAIVAVIHRALKQTSLPQESVQLIEDTTRDSAKQLFTMNDYLDVLIPRGGKQLIDTVVREASVPVLETGAGNCHVFIDETADKQMAFDIINAKTQRPSVCNAIETIVLHEKWAEQYGSELFSSLKKRGVELRGDQKALAMDSTIVLASEEDWGTEFLSLTPAVKLVSSIEEAIHHINTYGSMHSEAIISENEEKVSKFFVSVDAAALYHNASTRFTDGSEFGSGAEIGISTQKLHVRGPMGLPALTSTKYVIRGNGQIRK</sequence>
<keyword id="KW-0028">Amino-acid biosynthesis</keyword>
<keyword id="KW-0963">Cytoplasm</keyword>
<keyword id="KW-0521">NADP</keyword>
<keyword id="KW-0560">Oxidoreductase</keyword>
<keyword id="KW-0641">Proline biosynthesis</keyword>
<reference key="1">
    <citation type="submission" date="2008-10" db="EMBL/GenBank/DDBJ databases">
        <title>Genome sequence of Bacillus anthracis str. CDC 684.</title>
        <authorList>
            <person name="Dodson R.J."/>
            <person name="Munk A.C."/>
            <person name="Brettin T."/>
            <person name="Bruce D."/>
            <person name="Detter C."/>
            <person name="Tapia R."/>
            <person name="Han C."/>
            <person name="Sutton G."/>
            <person name="Sims D."/>
        </authorList>
    </citation>
    <scope>NUCLEOTIDE SEQUENCE [LARGE SCALE GENOMIC DNA]</scope>
    <source>
        <strain>CDC 684 / NRRL 3495</strain>
    </source>
</reference>
<accession>C3LEW9</accession>
<organism>
    <name type="scientific">Bacillus anthracis (strain CDC 684 / NRRL 3495)</name>
    <dbReference type="NCBI Taxonomy" id="568206"/>
    <lineage>
        <taxon>Bacteria</taxon>
        <taxon>Bacillati</taxon>
        <taxon>Bacillota</taxon>
        <taxon>Bacilli</taxon>
        <taxon>Bacillales</taxon>
        <taxon>Bacillaceae</taxon>
        <taxon>Bacillus</taxon>
        <taxon>Bacillus cereus group</taxon>
    </lineage>
</organism>
<dbReference type="EC" id="1.2.1.41" evidence="1"/>
<dbReference type="EMBL" id="CP001215">
    <property type="protein sequence ID" value="ACP16130.1"/>
    <property type="molecule type" value="Genomic_DNA"/>
</dbReference>
<dbReference type="RefSeq" id="WP_001006638.1">
    <property type="nucleotide sequence ID" value="NC_012581.1"/>
</dbReference>
<dbReference type="SMR" id="C3LEW9"/>
<dbReference type="GeneID" id="45022805"/>
<dbReference type="KEGG" id="bah:BAMEG_1612"/>
<dbReference type="HOGENOM" id="CLU_030231_0_0_9"/>
<dbReference type="UniPathway" id="UPA00098">
    <property type="reaction ID" value="UER00360"/>
</dbReference>
<dbReference type="GO" id="GO:0005737">
    <property type="term" value="C:cytoplasm"/>
    <property type="evidence" value="ECO:0007669"/>
    <property type="project" value="UniProtKB-SubCell"/>
</dbReference>
<dbReference type="GO" id="GO:0004350">
    <property type="term" value="F:glutamate-5-semialdehyde dehydrogenase activity"/>
    <property type="evidence" value="ECO:0007669"/>
    <property type="project" value="UniProtKB-UniRule"/>
</dbReference>
<dbReference type="GO" id="GO:0050661">
    <property type="term" value="F:NADP binding"/>
    <property type="evidence" value="ECO:0007669"/>
    <property type="project" value="InterPro"/>
</dbReference>
<dbReference type="GO" id="GO:0055129">
    <property type="term" value="P:L-proline biosynthetic process"/>
    <property type="evidence" value="ECO:0007669"/>
    <property type="project" value="UniProtKB-UniRule"/>
</dbReference>
<dbReference type="CDD" id="cd07079">
    <property type="entry name" value="ALDH_F18-19_ProA-GPR"/>
    <property type="match status" value="1"/>
</dbReference>
<dbReference type="FunFam" id="3.40.309.10:FF:000006">
    <property type="entry name" value="Gamma-glutamyl phosphate reductase"/>
    <property type="match status" value="1"/>
</dbReference>
<dbReference type="Gene3D" id="3.40.605.10">
    <property type="entry name" value="Aldehyde Dehydrogenase, Chain A, domain 1"/>
    <property type="match status" value="1"/>
</dbReference>
<dbReference type="Gene3D" id="3.40.309.10">
    <property type="entry name" value="Aldehyde Dehydrogenase, Chain A, domain 2"/>
    <property type="match status" value="1"/>
</dbReference>
<dbReference type="HAMAP" id="MF_00412">
    <property type="entry name" value="ProA"/>
    <property type="match status" value="1"/>
</dbReference>
<dbReference type="InterPro" id="IPR016161">
    <property type="entry name" value="Ald_DH/histidinol_DH"/>
</dbReference>
<dbReference type="InterPro" id="IPR016163">
    <property type="entry name" value="Ald_DH_C"/>
</dbReference>
<dbReference type="InterPro" id="IPR016162">
    <property type="entry name" value="Ald_DH_N"/>
</dbReference>
<dbReference type="InterPro" id="IPR015590">
    <property type="entry name" value="Aldehyde_DH_dom"/>
</dbReference>
<dbReference type="InterPro" id="IPR020593">
    <property type="entry name" value="G-glutamylP_reductase_CS"/>
</dbReference>
<dbReference type="InterPro" id="IPR012134">
    <property type="entry name" value="Glu-5-SA_DH"/>
</dbReference>
<dbReference type="InterPro" id="IPR000965">
    <property type="entry name" value="GPR_dom"/>
</dbReference>
<dbReference type="NCBIfam" id="NF001221">
    <property type="entry name" value="PRK00197.1"/>
    <property type="match status" value="1"/>
</dbReference>
<dbReference type="NCBIfam" id="TIGR00407">
    <property type="entry name" value="proA"/>
    <property type="match status" value="1"/>
</dbReference>
<dbReference type="PANTHER" id="PTHR11063:SF8">
    <property type="entry name" value="DELTA-1-PYRROLINE-5-CARBOXYLATE SYNTHASE"/>
    <property type="match status" value="1"/>
</dbReference>
<dbReference type="PANTHER" id="PTHR11063">
    <property type="entry name" value="GLUTAMATE SEMIALDEHYDE DEHYDROGENASE"/>
    <property type="match status" value="1"/>
</dbReference>
<dbReference type="Pfam" id="PF00171">
    <property type="entry name" value="Aldedh"/>
    <property type="match status" value="1"/>
</dbReference>
<dbReference type="PIRSF" id="PIRSF000151">
    <property type="entry name" value="GPR"/>
    <property type="match status" value="1"/>
</dbReference>
<dbReference type="SUPFAM" id="SSF53720">
    <property type="entry name" value="ALDH-like"/>
    <property type="match status" value="1"/>
</dbReference>
<dbReference type="PROSITE" id="PS01223">
    <property type="entry name" value="PROA"/>
    <property type="match status" value="1"/>
</dbReference>
<protein>
    <recommendedName>
        <fullName evidence="1">Gamma-glutamyl phosphate reductase</fullName>
        <shortName evidence="1">GPR</shortName>
        <ecNumber evidence="1">1.2.1.41</ecNumber>
    </recommendedName>
    <alternativeName>
        <fullName evidence="1">Glutamate-5-semialdehyde dehydrogenase</fullName>
    </alternativeName>
    <alternativeName>
        <fullName evidence="1">Glutamyl-gamma-semialdehyde dehydrogenase</fullName>
        <shortName evidence="1">GSA dehydrogenase</shortName>
    </alternativeName>
</protein>
<evidence type="ECO:0000255" key="1">
    <source>
        <dbReference type="HAMAP-Rule" id="MF_00412"/>
    </source>
</evidence>
<name>PROA_BACAC</name>